<gene>
    <name evidence="1" type="primary">mdoB</name>
    <name evidence="1" type="synonym">opgB</name>
    <name type="ordered locus">EcE24377A_4952</name>
</gene>
<keyword id="KW-0997">Cell inner membrane</keyword>
<keyword id="KW-1003">Cell membrane</keyword>
<keyword id="KW-0472">Membrane</keyword>
<keyword id="KW-1185">Reference proteome</keyword>
<keyword id="KW-0808">Transferase</keyword>
<keyword id="KW-0812">Transmembrane</keyword>
<keyword id="KW-1133">Transmembrane helix</keyword>
<comment type="function">
    <text evidence="1">Transfers a phosphoglycerol residue from phosphatidylglycerol to the membrane-bound nascent glucan backbones.</text>
</comment>
<comment type="catalytic activity">
    <reaction evidence="1">
        <text>a phosphatidylglycerol + a membrane-derived-oligosaccharide D-glucose = a 1,2-diacyl-sn-glycerol + a membrane-derived-oligosaccharide 6-(glycerophospho)-D-glucose.</text>
        <dbReference type="EC" id="2.7.8.20"/>
    </reaction>
</comment>
<comment type="pathway">
    <text evidence="1">Glycan metabolism; osmoregulated periplasmic glucan (OPG) biosynthesis.</text>
</comment>
<comment type="subcellular location">
    <subcellularLocation>
        <location evidence="1">Cell inner membrane</location>
        <topology evidence="1">Multi-pass membrane protein</topology>
    </subcellularLocation>
</comment>
<comment type="similarity">
    <text evidence="1">Belongs to the OpgB family.</text>
</comment>
<evidence type="ECO:0000255" key="1">
    <source>
        <dbReference type="HAMAP-Rule" id="MF_01070"/>
    </source>
</evidence>
<name>OPGB_ECO24</name>
<protein>
    <recommendedName>
        <fullName evidence="1">Phosphoglycerol transferase I</fullName>
        <ecNumber evidence="1">2.7.8.20</ecNumber>
    </recommendedName>
    <alternativeName>
        <fullName evidence="1">Phosphatidylglycerol--membrane-oligosaccharide glycerophosphotransferase</fullName>
    </alternativeName>
</protein>
<proteinExistence type="inferred from homology"/>
<dbReference type="EC" id="2.7.8.20" evidence="1"/>
<dbReference type="EMBL" id="CP000800">
    <property type="protein sequence ID" value="ABV20429.1"/>
    <property type="molecule type" value="Genomic_DNA"/>
</dbReference>
<dbReference type="RefSeq" id="WP_001292619.1">
    <property type="nucleotide sequence ID" value="NC_009801.1"/>
</dbReference>
<dbReference type="SMR" id="A7ZVP9"/>
<dbReference type="KEGG" id="ecw:EcE24377A_4952"/>
<dbReference type="HOGENOM" id="CLU_023986_1_0_6"/>
<dbReference type="UniPathway" id="UPA00637"/>
<dbReference type="Proteomes" id="UP000001122">
    <property type="component" value="Chromosome"/>
</dbReference>
<dbReference type="GO" id="GO:0005886">
    <property type="term" value="C:plasma membrane"/>
    <property type="evidence" value="ECO:0007669"/>
    <property type="project" value="UniProtKB-SubCell"/>
</dbReference>
<dbReference type="GO" id="GO:0008960">
    <property type="term" value="F:phosphatidylglycerol-membrane-oligosaccharide glycerophosphotransferase activity"/>
    <property type="evidence" value="ECO:0007669"/>
    <property type="project" value="UniProtKB-UniRule"/>
</dbReference>
<dbReference type="GO" id="GO:0009250">
    <property type="term" value="P:glucan biosynthetic process"/>
    <property type="evidence" value="ECO:0007669"/>
    <property type="project" value="UniProtKB-UniRule"/>
</dbReference>
<dbReference type="CDD" id="cd16015">
    <property type="entry name" value="LTA_synthase"/>
    <property type="match status" value="1"/>
</dbReference>
<dbReference type="FunFam" id="3.40.720.10:FF:000009">
    <property type="entry name" value="Phosphoglycerol transferase I"/>
    <property type="match status" value="1"/>
</dbReference>
<dbReference type="Gene3D" id="3.40.720.10">
    <property type="entry name" value="Alkaline Phosphatase, subunit A"/>
    <property type="match status" value="1"/>
</dbReference>
<dbReference type="HAMAP" id="MF_01070">
    <property type="entry name" value="MdoB_OpgB"/>
    <property type="match status" value="1"/>
</dbReference>
<dbReference type="InterPro" id="IPR017850">
    <property type="entry name" value="Alkaline_phosphatase_core_sf"/>
</dbReference>
<dbReference type="InterPro" id="IPR054288">
    <property type="entry name" value="DUF7024"/>
</dbReference>
<dbReference type="InterPro" id="IPR020881">
    <property type="entry name" value="OpgB"/>
</dbReference>
<dbReference type="InterPro" id="IPR050448">
    <property type="entry name" value="OpgB/LTA_synthase_biosynth"/>
</dbReference>
<dbReference type="InterPro" id="IPR000917">
    <property type="entry name" value="Sulfatase_N"/>
</dbReference>
<dbReference type="NCBIfam" id="NF003000">
    <property type="entry name" value="PRK03776.1"/>
    <property type="match status" value="1"/>
</dbReference>
<dbReference type="PANTHER" id="PTHR47371">
    <property type="entry name" value="LIPOTEICHOIC ACID SYNTHASE"/>
    <property type="match status" value="1"/>
</dbReference>
<dbReference type="PANTHER" id="PTHR47371:SF3">
    <property type="entry name" value="PHOSPHOGLYCEROL TRANSFERASE I"/>
    <property type="match status" value="1"/>
</dbReference>
<dbReference type="Pfam" id="PF22895">
    <property type="entry name" value="DUF7024"/>
    <property type="match status" value="1"/>
</dbReference>
<dbReference type="Pfam" id="PF00884">
    <property type="entry name" value="Sulfatase"/>
    <property type="match status" value="1"/>
</dbReference>
<dbReference type="SUPFAM" id="SSF53649">
    <property type="entry name" value="Alkaline phosphatase-like"/>
    <property type="match status" value="1"/>
</dbReference>
<feature type="chain" id="PRO_1000064572" description="Phosphoglycerol transferase I">
    <location>
        <begin position="1"/>
        <end position="763"/>
    </location>
</feature>
<feature type="transmembrane region" description="Helical" evidence="1">
    <location>
        <begin position="1"/>
        <end position="21"/>
    </location>
</feature>
<feature type="transmembrane region" description="Helical" evidence="1">
    <location>
        <begin position="26"/>
        <end position="46"/>
    </location>
</feature>
<feature type="transmembrane region" description="Helical" evidence="1">
    <location>
        <begin position="77"/>
        <end position="97"/>
    </location>
</feature>
<feature type="transmembrane region" description="Helical" evidence="1">
    <location>
        <begin position="108"/>
        <end position="128"/>
    </location>
</feature>
<accession>A7ZVP9</accession>
<sequence>MSELLSFALFLASVLIYAWKAGRNTWWFAATLTVLGLFVVLNITLFASDYFTGAGINDAVLYTLTNSLTGAGVSKYILPGIGIVLGLTAVFGALGWILRRRRHHPHHFGYSLLALLLALGSVDASPAFRQITELVKSQSRDGDPDFAAYYKEPSKTIPDPKLNLVYIYGESLERTYFDNEAFPDLTPELGALKNEGLDFSHTQQLPGTDYTIAGMVASQCGIPLFAPFEGNASASVSSFFPQNICLGDILKNSGYQNYFVQGANLRFAGKDVFLKSHGFDHLYGSEELKSVVADPHYRNDWGFYDDTVLDEAWKKFEELSRSGQRFSLFTLTVDTHHPDGFISRTCNRKKYDFDGKPNQSFSAVSCSQENIAAFINKIKASPWFKDTVIVVSSDHLAMNNTAWKYLNKQDRNNLFFVIRGDKPQQETLAVKRNTMDNGATVLDILGGDNYLGLGRSSLSGQSMSEIFLNIKEKTLAWKPDIIRLWKFPKEMKEFTIDQQKNIIAFSGSHFRLPLLLRVSDKRVEPLPESEYSAPLRFQLADFAPRDNFVWVDRCYKMAQLWAPELALSTDWCVSQGQLGGQQIVQHVDKTTWQGKTAFKDTVIDMARYKGNVDTLKIVDNDIRYKADSFIFNVAGAPEEVKQFSGISRPESWGRWSNAQLGDEVKIEYKHPLPKKFDLVITAKAYGNNASRPIPVRVGNEEQTLVLGNEVTTTTLHFDNPTDADTLVIVPPEPVSTNEGNILGHSPRKLGIGMVEIKVVEREG</sequence>
<reference key="1">
    <citation type="journal article" date="2008" name="J. Bacteriol.">
        <title>The pangenome structure of Escherichia coli: comparative genomic analysis of E. coli commensal and pathogenic isolates.</title>
        <authorList>
            <person name="Rasko D.A."/>
            <person name="Rosovitz M.J."/>
            <person name="Myers G.S.A."/>
            <person name="Mongodin E.F."/>
            <person name="Fricke W.F."/>
            <person name="Gajer P."/>
            <person name="Crabtree J."/>
            <person name="Sebaihia M."/>
            <person name="Thomson N.R."/>
            <person name="Chaudhuri R."/>
            <person name="Henderson I.R."/>
            <person name="Sperandio V."/>
            <person name="Ravel J."/>
        </authorList>
    </citation>
    <scope>NUCLEOTIDE SEQUENCE [LARGE SCALE GENOMIC DNA]</scope>
    <source>
        <strain>E24377A / ETEC</strain>
    </source>
</reference>
<organism>
    <name type="scientific">Escherichia coli O139:H28 (strain E24377A / ETEC)</name>
    <dbReference type="NCBI Taxonomy" id="331111"/>
    <lineage>
        <taxon>Bacteria</taxon>
        <taxon>Pseudomonadati</taxon>
        <taxon>Pseudomonadota</taxon>
        <taxon>Gammaproteobacteria</taxon>
        <taxon>Enterobacterales</taxon>
        <taxon>Enterobacteriaceae</taxon>
        <taxon>Escherichia</taxon>
    </lineage>
</organism>